<feature type="chain" id="PRO_1000070528" description="Nucleoid occlusion factor SlmA">
    <location>
        <begin position="1"/>
        <end position="197"/>
    </location>
</feature>
<feature type="domain" description="HTH tetR-type" evidence="1">
    <location>
        <begin position="7"/>
        <end position="67"/>
    </location>
</feature>
<feature type="DNA-binding region" description="H-T-H motif" evidence="1">
    <location>
        <begin position="30"/>
        <end position="49"/>
    </location>
</feature>
<feature type="coiled-coil region" evidence="1">
    <location>
        <begin position="110"/>
        <end position="130"/>
    </location>
</feature>
<name>SLMA_SHEFN</name>
<keyword id="KW-0131">Cell cycle</keyword>
<keyword id="KW-0132">Cell division</keyword>
<keyword id="KW-0175">Coiled coil</keyword>
<keyword id="KW-0963">Cytoplasm</keyword>
<keyword id="KW-0238">DNA-binding</keyword>
<keyword id="KW-1185">Reference proteome</keyword>
<organism>
    <name type="scientific">Shewanella frigidimarina (strain NCIMB 400)</name>
    <dbReference type="NCBI Taxonomy" id="318167"/>
    <lineage>
        <taxon>Bacteria</taxon>
        <taxon>Pseudomonadati</taxon>
        <taxon>Pseudomonadota</taxon>
        <taxon>Gammaproteobacteria</taxon>
        <taxon>Alteromonadales</taxon>
        <taxon>Shewanellaceae</taxon>
        <taxon>Shewanella</taxon>
    </lineage>
</organism>
<comment type="function">
    <text evidence="1">Required for nucleoid occlusion (NO) phenomenon, which prevents Z-ring formation and cell division over the nucleoid. Acts as a DNA-associated cell division inhibitor that binds simultaneously chromosomal DNA and FtsZ, and disrupts the assembly of FtsZ polymers. SlmA-DNA-binding sequences (SBS) are dispersed on non-Ter regions of the chromosome, preventing FtsZ polymerization at these regions.</text>
</comment>
<comment type="subunit">
    <text evidence="1">Homodimer. Interacts with FtsZ.</text>
</comment>
<comment type="subcellular location">
    <subcellularLocation>
        <location evidence="1">Cytoplasm</location>
        <location evidence="1">Nucleoid</location>
    </subcellularLocation>
</comment>
<comment type="similarity">
    <text evidence="1">Belongs to the nucleoid occlusion factor SlmA family.</text>
</comment>
<proteinExistence type="inferred from homology"/>
<evidence type="ECO:0000255" key="1">
    <source>
        <dbReference type="HAMAP-Rule" id="MF_01839"/>
    </source>
</evidence>
<protein>
    <recommendedName>
        <fullName evidence="1">Nucleoid occlusion factor SlmA</fullName>
    </recommendedName>
</protein>
<sequence>MAESPKINRREHILQCLAQMLETSPGQRITTAKLAAEVGVSEAALYRHFPSKARMFEGLIEFIEDAILSRLNIIMDEEKDTMTRCQLVLHLLLVFSERNPGISRVLNGDALLGENERLRSRIDVLFAKIETHIKQILREKTLREGVGFNIDEAILANLLLAFAEGRISQFVRSEFKQKPTQHFDEQWTFIQQQLLRS</sequence>
<accession>Q07WF8</accession>
<reference key="1">
    <citation type="submission" date="2006-08" db="EMBL/GenBank/DDBJ databases">
        <title>Complete sequence of Shewanella frigidimarina NCIMB 400.</title>
        <authorList>
            <consortium name="US DOE Joint Genome Institute"/>
            <person name="Copeland A."/>
            <person name="Lucas S."/>
            <person name="Lapidus A."/>
            <person name="Barry K."/>
            <person name="Detter J.C."/>
            <person name="Glavina del Rio T."/>
            <person name="Hammon N."/>
            <person name="Israni S."/>
            <person name="Dalin E."/>
            <person name="Tice H."/>
            <person name="Pitluck S."/>
            <person name="Fredrickson J.K."/>
            <person name="Kolker E."/>
            <person name="McCuel L.A."/>
            <person name="DiChristina T."/>
            <person name="Nealson K.H."/>
            <person name="Newman D."/>
            <person name="Tiedje J.M."/>
            <person name="Zhou J."/>
            <person name="Romine M.F."/>
            <person name="Culley D.E."/>
            <person name="Serres M."/>
            <person name="Chertkov O."/>
            <person name="Brettin T."/>
            <person name="Bruce D."/>
            <person name="Han C."/>
            <person name="Tapia R."/>
            <person name="Gilna P."/>
            <person name="Schmutz J."/>
            <person name="Larimer F."/>
            <person name="Land M."/>
            <person name="Hauser L."/>
            <person name="Kyrpides N."/>
            <person name="Mikhailova N."/>
            <person name="Richardson P."/>
        </authorList>
    </citation>
    <scope>NUCLEOTIDE SEQUENCE [LARGE SCALE GENOMIC DNA]</scope>
    <source>
        <strain>NCIMB 400</strain>
    </source>
</reference>
<dbReference type="EMBL" id="CP000447">
    <property type="protein sequence ID" value="ABI73656.1"/>
    <property type="molecule type" value="Genomic_DNA"/>
</dbReference>
<dbReference type="RefSeq" id="WP_011639240.1">
    <property type="nucleotide sequence ID" value="NC_008345.1"/>
</dbReference>
<dbReference type="SMR" id="Q07WF8"/>
<dbReference type="STRING" id="318167.Sfri_3831"/>
<dbReference type="KEGG" id="sfr:Sfri_3831"/>
<dbReference type="eggNOG" id="COG1309">
    <property type="taxonomic scope" value="Bacteria"/>
</dbReference>
<dbReference type="HOGENOM" id="CLU_069356_5_0_6"/>
<dbReference type="OrthoDB" id="9179041at2"/>
<dbReference type="Proteomes" id="UP000000684">
    <property type="component" value="Chromosome"/>
</dbReference>
<dbReference type="GO" id="GO:0043590">
    <property type="term" value="C:bacterial nucleoid"/>
    <property type="evidence" value="ECO:0007669"/>
    <property type="project" value="UniProtKB-UniRule"/>
</dbReference>
<dbReference type="GO" id="GO:0005737">
    <property type="term" value="C:cytoplasm"/>
    <property type="evidence" value="ECO:0007669"/>
    <property type="project" value="UniProtKB-UniRule"/>
</dbReference>
<dbReference type="GO" id="GO:0043565">
    <property type="term" value="F:sequence-specific DNA binding"/>
    <property type="evidence" value="ECO:0007669"/>
    <property type="project" value="UniProtKB-UniRule"/>
</dbReference>
<dbReference type="GO" id="GO:0051301">
    <property type="term" value="P:cell division"/>
    <property type="evidence" value="ECO:0007669"/>
    <property type="project" value="UniProtKB-KW"/>
</dbReference>
<dbReference type="GO" id="GO:0010974">
    <property type="term" value="P:negative regulation of division septum assembly"/>
    <property type="evidence" value="ECO:0007669"/>
    <property type="project" value="InterPro"/>
</dbReference>
<dbReference type="Gene3D" id="1.10.357.10">
    <property type="entry name" value="Tetracycline Repressor, domain 2"/>
    <property type="match status" value="1"/>
</dbReference>
<dbReference type="HAMAP" id="MF_01839">
    <property type="entry name" value="NO_factor_SlmA"/>
    <property type="match status" value="1"/>
</dbReference>
<dbReference type="InterPro" id="IPR009057">
    <property type="entry name" value="Homeodomain-like_sf"/>
</dbReference>
<dbReference type="InterPro" id="IPR050624">
    <property type="entry name" value="HTH-type_Tx_Regulator"/>
</dbReference>
<dbReference type="InterPro" id="IPR001647">
    <property type="entry name" value="HTH_TetR"/>
</dbReference>
<dbReference type="InterPro" id="IPR023769">
    <property type="entry name" value="NO_SlmA"/>
</dbReference>
<dbReference type="InterPro" id="IPR054580">
    <property type="entry name" value="SlmA-like_C"/>
</dbReference>
<dbReference type="NCBIfam" id="NF007015">
    <property type="entry name" value="PRK09480.1"/>
    <property type="match status" value="1"/>
</dbReference>
<dbReference type="PANTHER" id="PTHR43479">
    <property type="entry name" value="ACREF/ENVCD OPERON REPRESSOR-RELATED"/>
    <property type="match status" value="1"/>
</dbReference>
<dbReference type="PANTHER" id="PTHR43479:SF11">
    <property type="entry name" value="ACREF_ENVCD OPERON REPRESSOR-RELATED"/>
    <property type="match status" value="1"/>
</dbReference>
<dbReference type="Pfam" id="PF22276">
    <property type="entry name" value="SlmA-like_C"/>
    <property type="match status" value="1"/>
</dbReference>
<dbReference type="Pfam" id="PF00440">
    <property type="entry name" value="TetR_N"/>
    <property type="match status" value="1"/>
</dbReference>
<dbReference type="SUPFAM" id="SSF46689">
    <property type="entry name" value="Homeodomain-like"/>
    <property type="match status" value="1"/>
</dbReference>
<dbReference type="PROSITE" id="PS50977">
    <property type="entry name" value="HTH_TETR_2"/>
    <property type="match status" value="1"/>
</dbReference>
<gene>
    <name evidence="1" type="primary">slmA</name>
    <name type="ordered locus">Sfri_3831</name>
</gene>